<evidence type="ECO:0000255" key="1"/>
<evidence type="ECO:0000256" key="2">
    <source>
        <dbReference type="SAM" id="MobiDB-lite"/>
    </source>
</evidence>
<evidence type="ECO:0000305" key="3"/>
<accession>P26507</accession>
<protein>
    <recommendedName>
        <fullName>Nitrogenase iron-molybdenum cofactor biosynthesis protein NifN</fullName>
    </recommendedName>
</protein>
<reference key="1">
    <citation type="journal article" date="1990" name="Mol. Gen. Genet.">
        <title>The nifEN genes participating in FeMo cofactor biosynthesis and genes encoding dinitrogenase are part of the same operon in Bradyrhizobium species.</title>
        <authorList>
            <person name="Aguilar O.M."/>
            <person name="Taormino J."/>
            <person name="Thoeny B."/>
            <person name="Ramseier T."/>
            <person name="Hennecke H."/>
            <person name="Szalay A.A."/>
        </authorList>
    </citation>
    <scope>NUCLEOTIDE SEQUENCE [GENOMIC DNA]</scope>
    <source>
        <strain>JCM 10833 / BCRC 13528 / IAM 13628 / NBRC 14792 / USDA 110</strain>
    </source>
</reference>
<reference key="2">
    <citation type="journal article" date="2001" name="J. Bacteriol.">
        <title>Potential symbiosis-specific genes uncovered by sequencing a 410-kb DNA region of the Bradyrhizobium japonicum chromosome.</title>
        <authorList>
            <person name="Goettfert M."/>
            <person name="Roethlisberger S."/>
            <person name="Kuendig C."/>
            <person name="Beck C."/>
            <person name="Marty R."/>
            <person name="Hennecke H."/>
        </authorList>
    </citation>
    <scope>NUCLEOTIDE SEQUENCE [GENOMIC DNA]</scope>
    <source>
        <strain>USDA 110spc4</strain>
    </source>
</reference>
<reference key="3">
    <citation type="journal article" date="2002" name="DNA Res.">
        <title>Complete genomic sequence of nitrogen-fixing symbiotic bacterium Bradyrhizobium japonicum USDA110.</title>
        <authorList>
            <person name="Kaneko T."/>
            <person name="Nakamura Y."/>
            <person name="Sato S."/>
            <person name="Minamisawa K."/>
            <person name="Uchiumi T."/>
            <person name="Sasamoto S."/>
            <person name="Watanabe A."/>
            <person name="Idesawa K."/>
            <person name="Iriguchi M."/>
            <person name="Kawashima K."/>
            <person name="Kohara M."/>
            <person name="Matsumoto M."/>
            <person name="Shimpo S."/>
            <person name="Tsuruoka H."/>
            <person name="Wada T."/>
            <person name="Yamada M."/>
            <person name="Tabata S."/>
        </authorList>
    </citation>
    <scope>NUCLEOTIDE SEQUENCE [LARGE SCALE GENOMIC DNA]</scope>
    <source>
        <strain>JCM 10833 / BCRC 13528 / IAM 13628 / NBRC 14792 / USDA 110</strain>
    </source>
</reference>
<name>NIFN_BRADU</name>
<dbReference type="EMBL" id="X56894">
    <property type="protein sequence ID" value="CAA40214.1"/>
    <property type="molecule type" value="Genomic_DNA"/>
</dbReference>
<dbReference type="EMBL" id="AH010242">
    <property type="protein sequence ID" value="AAG60732.1"/>
    <property type="molecule type" value="Genomic_DNA"/>
</dbReference>
<dbReference type="EMBL" id="BA000040">
    <property type="protein sequence ID" value="BAC47011.1"/>
    <property type="molecule type" value="Genomic_DNA"/>
</dbReference>
<dbReference type="PIR" id="S12264">
    <property type="entry name" value="NIZJMN"/>
</dbReference>
<dbReference type="RefSeq" id="NP_768386.1">
    <property type="nucleotide sequence ID" value="NC_004463.1"/>
</dbReference>
<dbReference type="RefSeq" id="WP_011084555.1">
    <property type="nucleotide sequence ID" value="NZ_CP011360.1"/>
</dbReference>
<dbReference type="SMR" id="P26507"/>
<dbReference type="STRING" id="224911.AAV28_05660"/>
<dbReference type="EnsemblBacteria" id="BAC47011">
    <property type="protein sequence ID" value="BAC47011"/>
    <property type="gene ID" value="BAC47011"/>
</dbReference>
<dbReference type="GeneID" id="92969971"/>
<dbReference type="KEGG" id="bja:blr1746"/>
<dbReference type="PATRIC" id="fig|224911.44.peg.1211"/>
<dbReference type="eggNOG" id="COG2710">
    <property type="taxonomic scope" value="Bacteria"/>
</dbReference>
<dbReference type="HOGENOM" id="CLU_025876_2_0_5"/>
<dbReference type="InParanoid" id="P26507"/>
<dbReference type="OrthoDB" id="9800746at2"/>
<dbReference type="PhylomeDB" id="P26507"/>
<dbReference type="UniPathway" id="UPA00782"/>
<dbReference type="Proteomes" id="UP000002526">
    <property type="component" value="Chromosome"/>
</dbReference>
<dbReference type="GO" id="GO:0046872">
    <property type="term" value="F:metal ion binding"/>
    <property type="evidence" value="ECO:0007669"/>
    <property type="project" value="UniProtKB-KW"/>
</dbReference>
<dbReference type="GO" id="GO:0016163">
    <property type="term" value="F:nitrogenase activity"/>
    <property type="evidence" value="ECO:0007669"/>
    <property type="project" value="InterPro"/>
</dbReference>
<dbReference type="GO" id="GO:0009399">
    <property type="term" value="P:nitrogen fixation"/>
    <property type="evidence" value="ECO:0007669"/>
    <property type="project" value="UniProtKB-KW"/>
</dbReference>
<dbReference type="GO" id="GO:0065003">
    <property type="term" value="P:protein-containing complex assembly"/>
    <property type="evidence" value="ECO:0007669"/>
    <property type="project" value="InterPro"/>
</dbReference>
<dbReference type="CDD" id="cd01966">
    <property type="entry name" value="Nitrogenase_NifN_1"/>
    <property type="match status" value="1"/>
</dbReference>
<dbReference type="Gene3D" id="6.10.250.1090">
    <property type="match status" value="1"/>
</dbReference>
<dbReference type="Gene3D" id="3.40.50.1980">
    <property type="entry name" value="Nitrogenase molybdenum iron protein domain"/>
    <property type="match status" value="3"/>
</dbReference>
<dbReference type="InterPro" id="IPR050152">
    <property type="entry name" value="ChlB/BchB/BchZ"/>
</dbReference>
<dbReference type="InterPro" id="IPR000510">
    <property type="entry name" value="Nase/OxRdtase_comp1"/>
</dbReference>
<dbReference type="InterPro" id="IPR000318">
    <property type="entry name" value="Nase_comp1_CS"/>
</dbReference>
<dbReference type="InterPro" id="IPR005975">
    <property type="entry name" value="Nase_Mo-Fe_CF"/>
</dbReference>
<dbReference type="NCBIfam" id="TIGR01285">
    <property type="entry name" value="nifN"/>
    <property type="match status" value="1"/>
</dbReference>
<dbReference type="PANTHER" id="PTHR33712">
    <property type="entry name" value="LIGHT-INDEPENDENT PROTOCHLOROPHYLLIDE REDUCTASE SUBUNIT B"/>
    <property type="match status" value="1"/>
</dbReference>
<dbReference type="PANTHER" id="PTHR33712:SF7">
    <property type="entry name" value="LIGHT-INDEPENDENT PROTOCHLOROPHYLLIDE REDUCTASE SUBUNIT B"/>
    <property type="match status" value="1"/>
</dbReference>
<dbReference type="Pfam" id="PF00148">
    <property type="entry name" value="Oxidored_nitro"/>
    <property type="match status" value="1"/>
</dbReference>
<dbReference type="SUPFAM" id="SSF53807">
    <property type="entry name" value="Helical backbone' metal receptor"/>
    <property type="match status" value="1"/>
</dbReference>
<dbReference type="PROSITE" id="PS00699">
    <property type="entry name" value="NITROGENASE_1_1"/>
    <property type="match status" value="1"/>
</dbReference>
<gene>
    <name type="primary">nifN</name>
    <name type="ordered locus">blr1746</name>
</gene>
<comment type="function">
    <text>This protein may play a role in the biosynthesis of the prosthetic group of nitrogenase (FeMo cofactor).</text>
</comment>
<comment type="pathway">
    <text>Cofactor biosynthesis; Fe-Mo cofactor biosynthesis.</text>
</comment>
<comment type="similarity">
    <text evidence="3">Belongs to the NifD/NifK/NifE/NifN family.</text>
</comment>
<proteinExistence type="inferred from homology"/>
<feature type="chain" id="PRO_0000153127" description="Nitrogenase iron-molybdenum cofactor biosynthesis protein NifN">
    <location>
        <begin position="1"/>
        <end position="469"/>
    </location>
</feature>
<feature type="region of interest" description="Disordered" evidence="2">
    <location>
        <begin position="435"/>
        <end position="469"/>
    </location>
</feature>
<feature type="compositionally biased region" description="Basic and acidic residues" evidence="2">
    <location>
        <begin position="435"/>
        <end position="446"/>
    </location>
</feature>
<feature type="binding site" evidence="1">
    <location>
        <position position="44"/>
    </location>
    <ligand>
        <name>[7Fe-Mo-9S-C-homocitryl] cluster</name>
        <dbReference type="ChEBI" id="CHEBI:30409"/>
        <note>cofactor</note>
    </ligand>
</feature>
<keyword id="KW-0479">Metal-binding</keyword>
<keyword id="KW-0535">Nitrogen fixation</keyword>
<keyword id="KW-1185">Reference proteome</keyword>
<organism>
    <name type="scientific">Bradyrhizobium diazoefficiens (strain JCM 10833 / BCRC 13528 / IAM 13628 / NBRC 14792 / USDA 110)</name>
    <dbReference type="NCBI Taxonomy" id="224911"/>
    <lineage>
        <taxon>Bacteria</taxon>
        <taxon>Pseudomonadati</taxon>
        <taxon>Pseudomonadota</taxon>
        <taxon>Alphaproteobacteria</taxon>
        <taxon>Hyphomicrobiales</taxon>
        <taxon>Nitrobacteraceae</taxon>
        <taxon>Bradyrhizobium</taxon>
    </lineage>
</organism>
<sequence>MALVTAPTKACVVNPLKMSQPIGGAYAFMGLRGAMPLLHGSQGCTSFGLTLFVRHFKEAIPLQTTAMSEVATVLGGYENLEQAILNISKRAKPKIIGICSTGVTETNGDDVEAYLKLIRSAYPQLTKLPLVYVSTPDFKGAFQDGWEKAVARMVEVLVDRPSANGLRDPSKVNVLPGCHLTPGDLDELRALLEDFGLYPSFLPDLAGSLDGHIPDEFTSTTIGGIDVDEIASMGRAGWTIAIGAQMQRAAEVMQTKTGVPFRVFERLCGLHPNDDFMMFLSEISGRPIPSKYRRQRSQLADAMLDAHFHIGGRKVAIGAEPDLLFDLSGMLHDMGAQVTVAVTTTQSEVIERIRTKEVLIGDLEDLEGFAKEKHCDLLITHSHGRQAAGRLKVPFYRVGFPIFDRLGAGHQVSVGYRGTRNVIFQIANLVIAHRDENDRPTPDRWRTTPGLPQHVGHRRSTGAPERSIA</sequence>